<proteinExistence type="inferred from homology"/>
<keyword id="KW-0004">4Fe-4S</keyword>
<keyword id="KW-0249">Electron transport</keyword>
<keyword id="KW-0274">FAD</keyword>
<keyword id="KW-0285">Flavoprotein</keyword>
<keyword id="KW-0408">Iron</keyword>
<keyword id="KW-0411">Iron-sulfur</keyword>
<keyword id="KW-0472">Membrane</keyword>
<keyword id="KW-0479">Metal-binding</keyword>
<keyword id="KW-0496">Mitochondrion</keyword>
<keyword id="KW-0999">Mitochondrion inner membrane</keyword>
<keyword id="KW-0560">Oxidoreductase</keyword>
<keyword id="KW-1185">Reference proteome</keyword>
<keyword id="KW-0809">Transit peptide</keyword>
<keyword id="KW-0813">Transport</keyword>
<keyword id="KW-0830">Ubiquinone</keyword>
<gene>
    <name type="primary">let-721</name>
    <name type="ORF">C05D11.12</name>
</gene>
<sequence length="597" mass="65335">MRISGVTLFRVSSQLRNVVNGQWTTTHYTVKDRSTDPRWKDVDLARESDVYDVVIVGGGPSGLSAAIRLRQLAEKAQKELRVCVVEKASVIGGHTLSGAVIETRALDELIPNWKELGAPVYQQVTSESIAILTESGRIPVPVLPGVPLANHGNYIVRLGKVVQWLGEQAEAAGVEVWPEIAASEVLYNEDGSVKGIATSDVGIGKDGAPKDGFARGMEFHAKCTIFAEGCRGHLSKQVLDKFDLRTHAMTYGIGLKELWEIDPAKHRPGYVEHTMGWPLNVDQYGGSFLYHIEDQGQPLVSVGFVVALDYANPNLNPYKEFQKYKTHPSISKQLEGGKRIGYGARALNEGGFQSIPKLHFPGGCLVGCSAGFLNVAKLKGTHNAMKSGMVAAESIFEDIQQKGEDVQTIDPATYDKNIRDTYVVKELKATRNIRPSFNTSLGYIGGLIYSGIFYVFGRGIEPWTLGHGKKDNEKLIPVKDAKEIDYPKPDGKLTFDLLTSVSLTGTNHTEDQPAHLTLKNDQVPLDVNLAVYGGPEARFCPAGVYEFVPSEADESKKRLQINAQNCIHCKTCDIKDPQQNINWVTPEGGGGPKYEGM</sequence>
<feature type="transit peptide" description="Mitochondrion" evidence="2">
    <location>
        <begin position="1"/>
        <end status="unknown"/>
    </location>
</feature>
<feature type="chain" id="PRO_0000008665" description="Electron transfer flavoprotein-ubiquinone oxidoreductase, mitochondrial">
    <location>
        <begin status="unknown"/>
        <end position="597"/>
    </location>
</feature>
<feature type="intramembrane region" evidence="1">
    <location>
        <begin position="91"/>
        <end position="112"/>
    </location>
</feature>
<feature type="intramembrane region" evidence="1">
    <location>
        <begin position="409"/>
        <end position="426"/>
    </location>
</feature>
<feature type="domain" description="4Fe-4S ferredoxin-type" evidence="3">
    <location>
        <begin position="557"/>
        <end position="586"/>
    </location>
</feature>
<feature type="binding site" evidence="2">
    <location>
        <begin position="53"/>
        <end position="67"/>
    </location>
    <ligand>
        <name>FAD</name>
        <dbReference type="ChEBI" id="CHEBI:57692"/>
    </ligand>
</feature>
<feature type="binding site" evidence="1">
    <location>
        <position position="285"/>
    </location>
    <ligand>
        <name>a ubiquinone</name>
        <dbReference type="ChEBI" id="CHEBI:16389"/>
    </ligand>
</feature>
<feature type="binding site" evidence="1">
    <location>
        <position position="286"/>
    </location>
    <ligand>
        <name>a ubiquinone</name>
        <dbReference type="ChEBI" id="CHEBI:16389"/>
    </ligand>
</feature>
<feature type="binding site" evidence="2">
    <location>
        <position position="540"/>
    </location>
    <ligand>
        <name>[4Fe-4S] cluster</name>
        <dbReference type="ChEBI" id="CHEBI:49883"/>
    </ligand>
</feature>
<feature type="binding site" evidence="2">
    <location>
        <position position="566"/>
    </location>
    <ligand>
        <name>[4Fe-4S] cluster</name>
        <dbReference type="ChEBI" id="CHEBI:49883"/>
    </ligand>
</feature>
<feature type="binding site" evidence="2">
    <location>
        <position position="569"/>
    </location>
    <ligand>
        <name>[4Fe-4S] cluster</name>
        <dbReference type="ChEBI" id="CHEBI:49883"/>
    </ligand>
</feature>
<feature type="binding site" evidence="2">
    <location>
        <position position="572"/>
    </location>
    <ligand>
        <name>[4Fe-4S] cluster</name>
        <dbReference type="ChEBI" id="CHEBI:49883"/>
    </ligand>
</feature>
<protein>
    <recommendedName>
        <fullName>Electron transfer flavoprotein-ubiquinone oxidoreductase, mitochondrial</fullName>
        <shortName>ETF-QO</shortName>
        <shortName>ETF-ubiquinone oxidoreductase</shortName>
        <ecNumber>1.5.5.1</ecNumber>
    </recommendedName>
    <alternativeName>
        <fullName>Electron-transferring-flavoprotein dehydrogenase</fullName>
        <shortName>ETF dehydrogenase</shortName>
    </alternativeName>
    <alternativeName>
        <fullName>Lethal protein 721</fullName>
    </alternativeName>
</protein>
<dbReference type="EC" id="1.5.5.1"/>
<dbReference type="EMBL" id="FO080365">
    <property type="protein sequence ID" value="CCD63203.1"/>
    <property type="molecule type" value="Genomic_DNA"/>
</dbReference>
<dbReference type="PIR" id="D88483">
    <property type="entry name" value="D88483"/>
</dbReference>
<dbReference type="RefSeq" id="NP_001379625.1">
    <property type="nucleotide sequence ID" value="NM_001392123.1"/>
</dbReference>
<dbReference type="RefSeq" id="NP_498415.2">
    <property type="nucleotide sequence ID" value="NM_066014.6"/>
</dbReference>
<dbReference type="SMR" id="Q11190"/>
<dbReference type="BioGRID" id="41134">
    <property type="interactions" value="7"/>
</dbReference>
<dbReference type="FunCoup" id="Q11190">
    <property type="interactions" value="2574"/>
</dbReference>
<dbReference type="STRING" id="6239.C05D11.12.2"/>
<dbReference type="PaxDb" id="6239-C05D11.12.1"/>
<dbReference type="PeptideAtlas" id="Q11190"/>
<dbReference type="EnsemblMetazoa" id="C05D11.12.1">
    <property type="protein sequence ID" value="C05D11.12.1"/>
    <property type="gene ID" value="WBGene00002855"/>
</dbReference>
<dbReference type="GeneID" id="175916"/>
<dbReference type="UCSC" id="C05D11.12.1">
    <property type="organism name" value="c. elegans"/>
</dbReference>
<dbReference type="AGR" id="WB:WBGene00002855"/>
<dbReference type="WormBase" id="C05D11.12">
    <property type="protein sequence ID" value="CE29662"/>
    <property type="gene ID" value="WBGene00002855"/>
    <property type="gene designation" value="let-721"/>
</dbReference>
<dbReference type="eggNOG" id="KOG2415">
    <property type="taxonomic scope" value="Eukaryota"/>
</dbReference>
<dbReference type="GeneTree" id="ENSGT00390000010773"/>
<dbReference type="HOGENOM" id="CLU_009667_4_0_1"/>
<dbReference type="InParanoid" id="Q11190"/>
<dbReference type="OMA" id="INFQNCV"/>
<dbReference type="OrthoDB" id="437331at2759"/>
<dbReference type="PhylomeDB" id="Q11190"/>
<dbReference type="Reactome" id="R-CEL-611105">
    <property type="pathway name" value="Respiratory electron transport"/>
</dbReference>
<dbReference type="PRO" id="PR:Q11190"/>
<dbReference type="Proteomes" id="UP000001940">
    <property type="component" value="Chromosome III"/>
</dbReference>
<dbReference type="Bgee" id="WBGene00002855">
    <property type="expression patterns" value="Expressed in adult organism and 4 other cell types or tissues"/>
</dbReference>
<dbReference type="GO" id="GO:0005743">
    <property type="term" value="C:mitochondrial inner membrane"/>
    <property type="evidence" value="ECO:0000318"/>
    <property type="project" value="GO_Central"/>
</dbReference>
<dbReference type="GO" id="GO:0005739">
    <property type="term" value="C:mitochondrion"/>
    <property type="evidence" value="ECO:0000314"/>
    <property type="project" value="WormBase"/>
</dbReference>
<dbReference type="GO" id="GO:0051539">
    <property type="term" value="F:4 iron, 4 sulfur cluster binding"/>
    <property type="evidence" value="ECO:0007669"/>
    <property type="project" value="UniProtKB-KW"/>
</dbReference>
<dbReference type="GO" id="GO:0004174">
    <property type="term" value="F:electron-transferring-flavoprotein dehydrogenase activity"/>
    <property type="evidence" value="ECO:0000318"/>
    <property type="project" value="GO_Central"/>
</dbReference>
<dbReference type="GO" id="GO:0046872">
    <property type="term" value="F:metal ion binding"/>
    <property type="evidence" value="ECO:0007669"/>
    <property type="project" value="UniProtKB-KW"/>
</dbReference>
<dbReference type="GO" id="GO:0022900">
    <property type="term" value="P:electron transport chain"/>
    <property type="evidence" value="ECO:0000318"/>
    <property type="project" value="GO_Central"/>
</dbReference>
<dbReference type="FunFam" id="3.30.70.20:FF:000012">
    <property type="entry name" value="Electron transfer flavoprotein-ubiquinone oxidoreductase, mitochondrial"/>
    <property type="match status" value="1"/>
</dbReference>
<dbReference type="Gene3D" id="3.30.70.20">
    <property type="match status" value="1"/>
</dbReference>
<dbReference type="Gene3D" id="3.30.9.90">
    <property type="match status" value="1"/>
</dbReference>
<dbReference type="Gene3D" id="3.50.50.60">
    <property type="entry name" value="FAD/NAD(P)-binding domain"/>
    <property type="match status" value="1"/>
</dbReference>
<dbReference type="InterPro" id="IPR017896">
    <property type="entry name" value="4Fe4S_Fe-S-bd"/>
</dbReference>
<dbReference type="InterPro" id="IPR040156">
    <property type="entry name" value="ETF-QO"/>
</dbReference>
<dbReference type="InterPro" id="IPR049398">
    <property type="entry name" value="ETF-QO/FixC_UQ-bd"/>
</dbReference>
<dbReference type="InterPro" id="IPR007859">
    <property type="entry name" value="ETF-QO/FixX_C"/>
</dbReference>
<dbReference type="InterPro" id="IPR036188">
    <property type="entry name" value="FAD/NAD-bd_sf"/>
</dbReference>
<dbReference type="PANTHER" id="PTHR10617">
    <property type="entry name" value="ELECTRON TRANSFER FLAVOPROTEIN-UBIQUINONE OXIDOREDUCTASE"/>
    <property type="match status" value="1"/>
</dbReference>
<dbReference type="PANTHER" id="PTHR10617:SF107">
    <property type="entry name" value="ELECTRON TRANSFER FLAVOPROTEIN-UBIQUINONE OXIDOREDUCTASE, MITOCHONDRIAL"/>
    <property type="match status" value="1"/>
</dbReference>
<dbReference type="Pfam" id="PF21162">
    <property type="entry name" value="ETFQO_UQ-bd"/>
    <property type="match status" value="1"/>
</dbReference>
<dbReference type="Pfam" id="PF05187">
    <property type="entry name" value="Fer4_ETF_QO"/>
    <property type="match status" value="1"/>
</dbReference>
<dbReference type="Pfam" id="PF13450">
    <property type="entry name" value="NAD_binding_8"/>
    <property type="match status" value="1"/>
</dbReference>
<dbReference type="PRINTS" id="PR00411">
    <property type="entry name" value="PNDRDTASEI"/>
</dbReference>
<dbReference type="SUPFAM" id="SSF54862">
    <property type="entry name" value="4Fe-4S ferredoxins"/>
    <property type="match status" value="1"/>
</dbReference>
<dbReference type="SUPFAM" id="SSF54373">
    <property type="entry name" value="FAD-linked reductases, C-terminal domain"/>
    <property type="match status" value="1"/>
</dbReference>
<dbReference type="SUPFAM" id="SSF51905">
    <property type="entry name" value="FAD/NAD(P)-binding domain"/>
    <property type="match status" value="1"/>
</dbReference>
<dbReference type="PROSITE" id="PS51379">
    <property type="entry name" value="4FE4S_FER_2"/>
    <property type="match status" value="1"/>
</dbReference>
<reference key="1">
    <citation type="journal article" date="1998" name="Science">
        <title>Genome sequence of the nematode C. elegans: a platform for investigating biology.</title>
        <authorList>
            <consortium name="The C. elegans sequencing consortium"/>
        </authorList>
    </citation>
    <scope>NUCLEOTIDE SEQUENCE [LARGE SCALE GENOMIC DNA]</scope>
    <source>
        <strain>Bristol N2</strain>
    </source>
</reference>
<organism>
    <name type="scientific">Caenorhabditis elegans</name>
    <dbReference type="NCBI Taxonomy" id="6239"/>
    <lineage>
        <taxon>Eukaryota</taxon>
        <taxon>Metazoa</taxon>
        <taxon>Ecdysozoa</taxon>
        <taxon>Nematoda</taxon>
        <taxon>Chromadorea</taxon>
        <taxon>Rhabditida</taxon>
        <taxon>Rhabditina</taxon>
        <taxon>Rhabditomorpha</taxon>
        <taxon>Rhabditoidea</taxon>
        <taxon>Rhabditidae</taxon>
        <taxon>Peloderinae</taxon>
        <taxon>Caenorhabditis</taxon>
    </lineage>
</organism>
<name>ETFD_CAEEL</name>
<evidence type="ECO:0000250" key="1"/>
<evidence type="ECO:0000255" key="2"/>
<evidence type="ECO:0000255" key="3">
    <source>
        <dbReference type="PROSITE-ProRule" id="PRU00711"/>
    </source>
</evidence>
<evidence type="ECO:0000305" key="4"/>
<accession>Q11190</accession>
<comment type="function">
    <text evidence="1">Accepts electrons from ETF and reduces ubiquinone.</text>
</comment>
<comment type="catalytic activity">
    <reaction>
        <text>a ubiquinone + reduced [electron-transfer flavoprotein] = a ubiquinol + oxidized [electron-transfer flavoprotein] + H(+)</text>
        <dbReference type="Rhea" id="RHEA:24052"/>
        <dbReference type="Rhea" id="RHEA-COMP:9565"/>
        <dbReference type="Rhea" id="RHEA-COMP:9566"/>
        <dbReference type="Rhea" id="RHEA-COMP:10685"/>
        <dbReference type="Rhea" id="RHEA-COMP:10686"/>
        <dbReference type="ChEBI" id="CHEBI:15378"/>
        <dbReference type="ChEBI" id="CHEBI:16389"/>
        <dbReference type="ChEBI" id="CHEBI:17976"/>
        <dbReference type="ChEBI" id="CHEBI:57692"/>
        <dbReference type="ChEBI" id="CHEBI:58307"/>
        <dbReference type="EC" id="1.5.5.1"/>
    </reaction>
</comment>
<comment type="cofactor">
    <cofactor evidence="1">
        <name>[4Fe-4S] cluster</name>
        <dbReference type="ChEBI" id="CHEBI:49883"/>
    </cofactor>
    <text evidence="1">Binds 1 [4Fe-4S] cluster.</text>
</comment>
<comment type="cofactor">
    <cofactor evidence="1">
        <name>FAD</name>
        <dbReference type="ChEBI" id="CHEBI:57692"/>
    </cofactor>
</comment>
<comment type="subunit">
    <text evidence="1">Monomer.</text>
</comment>
<comment type="subcellular location">
    <subcellularLocation>
        <location evidence="1">Mitochondrion inner membrane</location>
    </subcellularLocation>
</comment>
<comment type="similarity">
    <text evidence="4">Belongs to the ETF-QO/FixC family.</text>
</comment>